<gene>
    <name evidence="7" type="primary">Acsl1</name>
    <name type="synonym">Acsl2</name>
    <name type="synonym">Facl2</name>
</gene>
<reference key="1">
    <citation type="submission" date="1994-10" db="EMBL/GenBank/DDBJ databases">
        <authorList>
            <person name="Schaffer J.E."/>
        </authorList>
    </citation>
    <scope>NUCLEOTIDE SEQUENCE [MRNA]</scope>
    <source>
        <strain>SWR/J</strain>
    </source>
</reference>
<reference key="2">
    <citation type="journal article" date="2005" name="Science">
        <title>The transcriptional landscape of the mammalian genome.</title>
        <authorList>
            <person name="Carninci P."/>
            <person name="Kasukawa T."/>
            <person name="Katayama S."/>
            <person name="Gough J."/>
            <person name="Frith M.C."/>
            <person name="Maeda N."/>
            <person name="Oyama R."/>
            <person name="Ravasi T."/>
            <person name="Lenhard B."/>
            <person name="Wells C."/>
            <person name="Kodzius R."/>
            <person name="Shimokawa K."/>
            <person name="Bajic V.B."/>
            <person name="Brenner S.E."/>
            <person name="Batalov S."/>
            <person name="Forrest A.R."/>
            <person name="Zavolan M."/>
            <person name="Davis M.J."/>
            <person name="Wilming L.G."/>
            <person name="Aidinis V."/>
            <person name="Allen J.E."/>
            <person name="Ambesi-Impiombato A."/>
            <person name="Apweiler R."/>
            <person name="Aturaliya R.N."/>
            <person name="Bailey T.L."/>
            <person name="Bansal M."/>
            <person name="Baxter L."/>
            <person name="Beisel K.W."/>
            <person name="Bersano T."/>
            <person name="Bono H."/>
            <person name="Chalk A.M."/>
            <person name="Chiu K.P."/>
            <person name="Choudhary V."/>
            <person name="Christoffels A."/>
            <person name="Clutterbuck D.R."/>
            <person name="Crowe M.L."/>
            <person name="Dalla E."/>
            <person name="Dalrymple B.P."/>
            <person name="de Bono B."/>
            <person name="Della Gatta G."/>
            <person name="di Bernardo D."/>
            <person name="Down T."/>
            <person name="Engstrom P."/>
            <person name="Fagiolini M."/>
            <person name="Faulkner G."/>
            <person name="Fletcher C.F."/>
            <person name="Fukushima T."/>
            <person name="Furuno M."/>
            <person name="Futaki S."/>
            <person name="Gariboldi M."/>
            <person name="Georgii-Hemming P."/>
            <person name="Gingeras T.R."/>
            <person name="Gojobori T."/>
            <person name="Green R.E."/>
            <person name="Gustincich S."/>
            <person name="Harbers M."/>
            <person name="Hayashi Y."/>
            <person name="Hensch T.K."/>
            <person name="Hirokawa N."/>
            <person name="Hill D."/>
            <person name="Huminiecki L."/>
            <person name="Iacono M."/>
            <person name="Ikeo K."/>
            <person name="Iwama A."/>
            <person name="Ishikawa T."/>
            <person name="Jakt M."/>
            <person name="Kanapin A."/>
            <person name="Katoh M."/>
            <person name="Kawasawa Y."/>
            <person name="Kelso J."/>
            <person name="Kitamura H."/>
            <person name="Kitano H."/>
            <person name="Kollias G."/>
            <person name="Krishnan S.P."/>
            <person name="Kruger A."/>
            <person name="Kummerfeld S.K."/>
            <person name="Kurochkin I.V."/>
            <person name="Lareau L.F."/>
            <person name="Lazarevic D."/>
            <person name="Lipovich L."/>
            <person name="Liu J."/>
            <person name="Liuni S."/>
            <person name="McWilliam S."/>
            <person name="Madan Babu M."/>
            <person name="Madera M."/>
            <person name="Marchionni L."/>
            <person name="Matsuda H."/>
            <person name="Matsuzawa S."/>
            <person name="Miki H."/>
            <person name="Mignone F."/>
            <person name="Miyake S."/>
            <person name="Morris K."/>
            <person name="Mottagui-Tabar S."/>
            <person name="Mulder N."/>
            <person name="Nakano N."/>
            <person name="Nakauchi H."/>
            <person name="Ng P."/>
            <person name="Nilsson R."/>
            <person name="Nishiguchi S."/>
            <person name="Nishikawa S."/>
            <person name="Nori F."/>
            <person name="Ohara O."/>
            <person name="Okazaki Y."/>
            <person name="Orlando V."/>
            <person name="Pang K.C."/>
            <person name="Pavan W.J."/>
            <person name="Pavesi G."/>
            <person name="Pesole G."/>
            <person name="Petrovsky N."/>
            <person name="Piazza S."/>
            <person name="Reed J."/>
            <person name="Reid J.F."/>
            <person name="Ring B.Z."/>
            <person name="Ringwald M."/>
            <person name="Rost B."/>
            <person name="Ruan Y."/>
            <person name="Salzberg S.L."/>
            <person name="Sandelin A."/>
            <person name="Schneider C."/>
            <person name="Schoenbach C."/>
            <person name="Sekiguchi K."/>
            <person name="Semple C.A."/>
            <person name="Seno S."/>
            <person name="Sessa L."/>
            <person name="Sheng Y."/>
            <person name="Shibata Y."/>
            <person name="Shimada H."/>
            <person name="Shimada K."/>
            <person name="Silva D."/>
            <person name="Sinclair B."/>
            <person name="Sperling S."/>
            <person name="Stupka E."/>
            <person name="Sugiura K."/>
            <person name="Sultana R."/>
            <person name="Takenaka Y."/>
            <person name="Taki K."/>
            <person name="Tammoja K."/>
            <person name="Tan S.L."/>
            <person name="Tang S."/>
            <person name="Taylor M.S."/>
            <person name="Tegner J."/>
            <person name="Teichmann S.A."/>
            <person name="Ueda H.R."/>
            <person name="van Nimwegen E."/>
            <person name="Verardo R."/>
            <person name="Wei C.L."/>
            <person name="Yagi K."/>
            <person name="Yamanishi H."/>
            <person name="Zabarovsky E."/>
            <person name="Zhu S."/>
            <person name="Zimmer A."/>
            <person name="Hide W."/>
            <person name="Bult C."/>
            <person name="Grimmond S.M."/>
            <person name="Teasdale R.D."/>
            <person name="Liu E.T."/>
            <person name="Brusic V."/>
            <person name="Quackenbush J."/>
            <person name="Wahlestedt C."/>
            <person name="Mattick J.S."/>
            <person name="Hume D.A."/>
            <person name="Kai C."/>
            <person name="Sasaki D."/>
            <person name="Tomaru Y."/>
            <person name="Fukuda S."/>
            <person name="Kanamori-Katayama M."/>
            <person name="Suzuki M."/>
            <person name="Aoki J."/>
            <person name="Arakawa T."/>
            <person name="Iida J."/>
            <person name="Imamura K."/>
            <person name="Itoh M."/>
            <person name="Kato T."/>
            <person name="Kawaji H."/>
            <person name="Kawagashira N."/>
            <person name="Kawashima T."/>
            <person name="Kojima M."/>
            <person name="Kondo S."/>
            <person name="Konno H."/>
            <person name="Nakano K."/>
            <person name="Ninomiya N."/>
            <person name="Nishio T."/>
            <person name="Okada M."/>
            <person name="Plessy C."/>
            <person name="Shibata K."/>
            <person name="Shiraki T."/>
            <person name="Suzuki S."/>
            <person name="Tagami M."/>
            <person name="Waki K."/>
            <person name="Watahiki A."/>
            <person name="Okamura-Oho Y."/>
            <person name="Suzuki H."/>
            <person name="Kawai J."/>
            <person name="Hayashizaki Y."/>
        </authorList>
    </citation>
    <scope>NUCLEOTIDE SEQUENCE [LARGE SCALE MRNA]</scope>
    <source>
        <strain>BALB/cJ</strain>
        <strain>C57BL/6J</strain>
        <tissue>Liver</tissue>
    </source>
</reference>
<reference key="3">
    <citation type="journal article" date="2004" name="Genome Res.">
        <title>The status, quality, and expansion of the NIH full-length cDNA project: the Mammalian Gene Collection (MGC).</title>
        <authorList>
            <consortium name="The MGC Project Team"/>
        </authorList>
    </citation>
    <scope>NUCLEOTIDE SEQUENCE [LARGE SCALE MRNA]</scope>
    <source>
        <strain>FVB/N</strain>
        <tissue>Liver</tissue>
    </source>
</reference>
<reference key="4">
    <citation type="submission" date="2005-07" db="UniProtKB">
        <authorList>
            <person name="Bienvenut W.V."/>
        </authorList>
    </citation>
    <scope>PROTEIN SEQUENCE OF 1-8; 358-369; 389-396; 563-573; 617-627 AND 634-641</scope>
    <scope>ACETYLATION AT MET-1</scope>
    <scope>IDENTIFICATION BY MASS SPECTROMETRY</scope>
    <source>
        <strain>C57BL/6J</strain>
        <tissue>Liver</tissue>
    </source>
</reference>
<reference key="5">
    <citation type="journal article" date="2007" name="Proc. Natl. Acad. Sci. U.S.A.">
        <title>Large-scale phosphorylation analysis of mouse liver.</title>
        <authorList>
            <person name="Villen J."/>
            <person name="Beausoleil S.A."/>
            <person name="Gerber S.A."/>
            <person name="Gygi S.P."/>
        </authorList>
    </citation>
    <scope>PHOSPHORYLATION [LARGE SCALE ANALYSIS] AT SER-621</scope>
    <scope>IDENTIFICATION BY MASS SPECTROMETRY [LARGE SCALE ANALYSIS]</scope>
    <source>
        <tissue>Liver</tissue>
    </source>
</reference>
<reference key="6">
    <citation type="journal article" date="2010" name="Cell">
        <title>A tissue-specific atlas of mouse protein phosphorylation and expression.</title>
        <authorList>
            <person name="Huttlin E.L."/>
            <person name="Jedrychowski M.P."/>
            <person name="Elias J.E."/>
            <person name="Goswami T."/>
            <person name="Rad R."/>
            <person name="Beausoleil S.A."/>
            <person name="Villen J."/>
            <person name="Haas W."/>
            <person name="Sowa M.E."/>
            <person name="Gygi S.P."/>
        </authorList>
    </citation>
    <scope>PHOSPHORYLATION [LARGE SCALE ANALYSIS] AT SER-621</scope>
    <scope>IDENTIFICATION BY MASS SPECTROMETRY [LARGE SCALE ANALYSIS]</scope>
    <source>
        <tissue>Brain</tissue>
        <tissue>Brown adipose tissue</tissue>
        <tissue>Heart</tissue>
        <tissue>Kidney</tissue>
        <tissue>Liver</tissue>
        <tissue>Lung</tissue>
        <tissue>Pancreas</tissue>
        <tissue>Spleen</tissue>
        <tissue>Testis</tissue>
    </source>
</reference>
<reference key="7">
    <citation type="journal article" date="2013" name="Proc. Natl. Acad. Sci. U.S.A.">
        <title>Label-free quantitative proteomics of the lysine acetylome in mitochondria identifies substrates of SIRT3 in metabolic pathways.</title>
        <authorList>
            <person name="Rardin M.J."/>
            <person name="Newman J.C."/>
            <person name="Held J.M."/>
            <person name="Cusack M.P."/>
            <person name="Sorensen D.J."/>
            <person name="Li B."/>
            <person name="Schilling B."/>
            <person name="Mooney S.D."/>
            <person name="Kahn C.R."/>
            <person name="Verdin E."/>
            <person name="Gibson B.W."/>
        </authorList>
    </citation>
    <scope>ACETYLATION [LARGE SCALE ANALYSIS] AT LYS-208; LYS-357 AND LYS-387</scope>
    <scope>IDENTIFICATION BY MASS SPECTROMETRY [LARGE SCALE ANALYSIS]</scope>
    <source>
        <tissue>Liver</tissue>
    </source>
</reference>
<accession>P41216</accession>
<accession>Q6GTG6</accession>
<accession>Q9DBK5</accession>
<evidence type="ECO:0000250" key="1"/>
<evidence type="ECO:0000250" key="2">
    <source>
        <dbReference type="UniProtKB" id="P18163"/>
    </source>
</evidence>
<evidence type="ECO:0000250" key="3">
    <source>
        <dbReference type="UniProtKB" id="P33121"/>
    </source>
</evidence>
<evidence type="ECO:0000255" key="4"/>
<evidence type="ECO:0000269" key="5">
    <source ref="4"/>
</evidence>
<evidence type="ECO:0000305" key="6"/>
<evidence type="ECO:0000312" key="7">
    <source>
        <dbReference type="MGI" id="MGI:102797"/>
    </source>
</evidence>
<evidence type="ECO:0007744" key="8">
    <source>
    </source>
</evidence>
<evidence type="ECO:0007744" key="9">
    <source>
    </source>
</evidence>
<evidence type="ECO:0007744" key="10">
    <source>
    </source>
</evidence>
<proteinExistence type="evidence at protein level"/>
<comment type="function">
    <text evidence="2 3">Catalyzes the conversion of long-chain fatty acids to their active form acyl-CoAs for both synthesis of cellular lipids, and degradation via beta-oxidation (By similarity). Preferentially uses palmitoleate, oleate and linoleate (By similarity). Preferentially activates arachidonate than epoxyeicosatrienoic acids (EETs) or hydroxyeicosatrienoic acids (HETEs).</text>
</comment>
<comment type="catalytic activity">
    <reaction evidence="2">
        <text>a long-chain fatty acid + ATP + CoA = a long-chain fatty acyl-CoA + AMP + diphosphate</text>
        <dbReference type="Rhea" id="RHEA:15421"/>
        <dbReference type="ChEBI" id="CHEBI:30616"/>
        <dbReference type="ChEBI" id="CHEBI:33019"/>
        <dbReference type="ChEBI" id="CHEBI:57287"/>
        <dbReference type="ChEBI" id="CHEBI:57560"/>
        <dbReference type="ChEBI" id="CHEBI:83139"/>
        <dbReference type="ChEBI" id="CHEBI:456215"/>
        <dbReference type="EC" id="6.2.1.3"/>
    </reaction>
    <physiologicalReaction direction="left-to-right" evidence="2">
        <dbReference type="Rhea" id="RHEA:15422"/>
    </physiologicalReaction>
</comment>
<comment type="catalytic activity">
    <reaction evidence="2">
        <text>(5Z,8Z,11Z,14Z)-eicosatetraenoate + ATP + CoA = (5Z,8Z,11Z,14Z)-eicosatetraenoyl-CoA + AMP + diphosphate</text>
        <dbReference type="Rhea" id="RHEA:19713"/>
        <dbReference type="ChEBI" id="CHEBI:30616"/>
        <dbReference type="ChEBI" id="CHEBI:32395"/>
        <dbReference type="ChEBI" id="CHEBI:33019"/>
        <dbReference type="ChEBI" id="CHEBI:57287"/>
        <dbReference type="ChEBI" id="CHEBI:57368"/>
        <dbReference type="ChEBI" id="CHEBI:456215"/>
        <dbReference type="EC" id="6.2.1.15"/>
    </reaction>
    <physiologicalReaction direction="left-to-right" evidence="2">
        <dbReference type="Rhea" id="RHEA:19714"/>
    </physiologicalReaction>
</comment>
<comment type="catalytic activity">
    <reaction evidence="2">
        <text>3,7,11,15-tetramethylhexadecanoate + ATP + CoA = phytanoyl-CoA + AMP + diphosphate</text>
        <dbReference type="Rhea" id="RHEA:21380"/>
        <dbReference type="ChEBI" id="CHEBI:30616"/>
        <dbReference type="ChEBI" id="CHEBI:33019"/>
        <dbReference type="ChEBI" id="CHEBI:37257"/>
        <dbReference type="ChEBI" id="CHEBI:57287"/>
        <dbReference type="ChEBI" id="CHEBI:57391"/>
        <dbReference type="ChEBI" id="CHEBI:456215"/>
        <dbReference type="EC" id="6.2.1.24"/>
    </reaction>
    <physiologicalReaction direction="left-to-right" evidence="2">
        <dbReference type="Rhea" id="RHEA:21381"/>
    </physiologicalReaction>
</comment>
<comment type="catalytic activity">
    <reaction evidence="3">
        <text>hexadecanoate + ATP + CoA = hexadecanoyl-CoA + AMP + diphosphate</text>
        <dbReference type="Rhea" id="RHEA:30751"/>
        <dbReference type="ChEBI" id="CHEBI:7896"/>
        <dbReference type="ChEBI" id="CHEBI:30616"/>
        <dbReference type="ChEBI" id="CHEBI:33019"/>
        <dbReference type="ChEBI" id="CHEBI:57287"/>
        <dbReference type="ChEBI" id="CHEBI:57379"/>
        <dbReference type="ChEBI" id="CHEBI:456215"/>
    </reaction>
    <physiologicalReaction direction="left-to-right" evidence="3">
        <dbReference type="Rhea" id="RHEA:30752"/>
    </physiologicalReaction>
</comment>
<comment type="catalytic activity">
    <reaction evidence="3">
        <text>(E)-hexadec-2-enoate + ATP + CoA = (2E)-hexadecenoyl-CoA + AMP + diphosphate</text>
        <dbReference type="Rhea" id="RHEA:36139"/>
        <dbReference type="ChEBI" id="CHEBI:30616"/>
        <dbReference type="ChEBI" id="CHEBI:33019"/>
        <dbReference type="ChEBI" id="CHEBI:57287"/>
        <dbReference type="ChEBI" id="CHEBI:61526"/>
        <dbReference type="ChEBI" id="CHEBI:72745"/>
        <dbReference type="ChEBI" id="CHEBI:456215"/>
    </reaction>
    <physiologicalReaction direction="left-to-right" evidence="3">
        <dbReference type="Rhea" id="RHEA:36140"/>
    </physiologicalReaction>
</comment>
<comment type="catalytic activity">
    <reaction evidence="2">
        <text>2,6,10,14-tetramethylpentadecanoate + ATP + CoA = pristanoyl-CoA + AMP + diphosphate</text>
        <dbReference type="Rhea" id="RHEA:47264"/>
        <dbReference type="ChEBI" id="CHEBI:30616"/>
        <dbReference type="ChEBI" id="CHEBI:33019"/>
        <dbReference type="ChEBI" id="CHEBI:57287"/>
        <dbReference type="ChEBI" id="CHEBI:77250"/>
        <dbReference type="ChEBI" id="CHEBI:77268"/>
        <dbReference type="ChEBI" id="CHEBI:456215"/>
    </reaction>
    <physiologicalReaction direction="left-to-right" evidence="2">
        <dbReference type="Rhea" id="RHEA:47265"/>
    </physiologicalReaction>
</comment>
<comment type="catalytic activity">
    <reaction evidence="2">
        <text>14,15-epoxy-(5Z,8Z,11Z)-eicosatrienoate + ATP + CoA = 14,15-epoxy-(5Z,8Z,11Z)-eicosatrienoyl-CoA + AMP + diphosphate</text>
        <dbReference type="Rhea" id="RHEA:52016"/>
        <dbReference type="ChEBI" id="CHEBI:30616"/>
        <dbReference type="ChEBI" id="CHEBI:33019"/>
        <dbReference type="ChEBI" id="CHEBI:57287"/>
        <dbReference type="ChEBI" id="CHEBI:84024"/>
        <dbReference type="ChEBI" id="CHEBI:136117"/>
        <dbReference type="ChEBI" id="CHEBI:456215"/>
    </reaction>
    <physiologicalReaction direction="left-to-right" evidence="2">
        <dbReference type="Rhea" id="RHEA:52017"/>
    </physiologicalReaction>
</comment>
<comment type="catalytic activity">
    <reaction evidence="2">
        <text>5-hydroxy-(6E,8Z,11Z,14Z)-eicosatetraenoate + ATP + CoA = 5-hydroxy-(6E,8Z,11Z,14Z)-eicosatetraenoyl-CoA + AMP + diphosphate</text>
        <dbReference type="Rhea" id="RHEA:52108"/>
        <dbReference type="ChEBI" id="CHEBI:30616"/>
        <dbReference type="ChEBI" id="CHEBI:33019"/>
        <dbReference type="ChEBI" id="CHEBI:57287"/>
        <dbReference type="ChEBI" id="CHEBI:65341"/>
        <dbReference type="ChEBI" id="CHEBI:136407"/>
        <dbReference type="ChEBI" id="CHEBI:456215"/>
    </reaction>
    <physiologicalReaction direction="left-to-right" evidence="2">
        <dbReference type="Rhea" id="RHEA:52109"/>
    </physiologicalReaction>
</comment>
<comment type="catalytic activity">
    <reaction evidence="2">
        <text>12-hydroxy-(5Z,8Z,10E,14Z)-eicosatetraenoate + ATP + CoA = 12-hydroxy-(5Z,8Z,10E,14Z)-eicosatetraenoyl-CoA + AMP + diphosphate</text>
        <dbReference type="Rhea" id="RHEA:52112"/>
        <dbReference type="ChEBI" id="CHEBI:30616"/>
        <dbReference type="ChEBI" id="CHEBI:33019"/>
        <dbReference type="ChEBI" id="CHEBI:57287"/>
        <dbReference type="ChEBI" id="CHEBI:90718"/>
        <dbReference type="ChEBI" id="CHEBI:136408"/>
        <dbReference type="ChEBI" id="CHEBI:456215"/>
    </reaction>
    <physiologicalReaction direction="left-to-right" evidence="2">
        <dbReference type="Rhea" id="RHEA:52113"/>
    </physiologicalReaction>
</comment>
<comment type="catalytic activity">
    <reaction evidence="2">
        <text>15-hydroxy-(5Z,8Z,11Z,13E)-eicosatetraenoate + ATP + CoA = 15-hydroxy-(5Z,8Z,11Z,13E)-eicosatetraenoyl-CoA + AMP + diphosphate</text>
        <dbReference type="Rhea" id="RHEA:52116"/>
        <dbReference type="ChEBI" id="CHEBI:30616"/>
        <dbReference type="ChEBI" id="CHEBI:33019"/>
        <dbReference type="ChEBI" id="CHEBI:57287"/>
        <dbReference type="ChEBI" id="CHEBI:78832"/>
        <dbReference type="ChEBI" id="CHEBI:136409"/>
        <dbReference type="ChEBI" id="CHEBI:456215"/>
    </reaction>
    <physiologicalReaction direction="left-to-right" evidence="2">
        <dbReference type="Rhea" id="RHEA:52117"/>
    </physiologicalReaction>
</comment>
<comment type="catalytic activity">
    <reaction evidence="3">
        <text>(9Z)-octadecenoate + ATP + CoA = (9Z)-octadecenoyl-CoA + AMP + diphosphate</text>
        <dbReference type="Rhea" id="RHEA:33607"/>
        <dbReference type="ChEBI" id="CHEBI:30616"/>
        <dbReference type="ChEBI" id="CHEBI:30823"/>
        <dbReference type="ChEBI" id="CHEBI:33019"/>
        <dbReference type="ChEBI" id="CHEBI:57287"/>
        <dbReference type="ChEBI" id="CHEBI:57387"/>
        <dbReference type="ChEBI" id="CHEBI:456215"/>
    </reaction>
    <physiologicalReaction direction="left-to-right" evidence="3">
        <dbReference type="Rhea" id="RHEA:33608"/>
    </physiologicalReaction>
</comment>
<comment type="cofactor">
    <cofactor>
        <name>Mg(2+)</name>
        <dbReference type="ChEBI" id="CHEBI:18420"/>
    </cofactor>
</comment>
<comment type="activity regulation">
    <text evidence="2">Inhibited at high temperature and by arachidonate.</text>
</comment>
<comment type="subcellular location">
    <subcellularLocation>
        <location evidence="1">Mitochondrion outer membrane</location>
        <topology evidence="1">Single-pass type III membrane protein</topology>
    </subcellularLocation>
    <subcellularLocation>
        <location evidence="1">Peroxisome membrane</location>
        <topology evidence="1">Single-pass type III membrane protein</topology>
    </subcellularLocation>
    <subcellularLocation>
        <location evidence="1">Microsome membrane</location>
        <topology evidence="1">Single-pass type III membrane protein</topology>
    </subcellularLocation>
    <subcellularLocation>
        <location evidence="3">Endoplasmic reticulum membrane</location>
        <topology evidence="1">Single-pass type III membrane protein</topology>
    </subcellularLocation>
</comment>
<comment type="similarity">
    <text evidence="6">Belongs to the ATP-dependent AMP-binding enzyme family.</text>
</comment>
<feature type="chain" id="PRO_0000193105" description="Long-chain-fatty-acid--CoA ligase 1">
    <location>
        <begin position="1"/>
        <end position="699"/>
    </location>
</feature>
<feature type="transmembrane region" description="Helical; Signal-anchor for type III membrane protein" evidence="4">
    <location>
        <begin position="25"/>
        <end position="45"/>
    </location>
</feature>
<feature type="topological domain" description="Cytoplasmic" evidence="4">
    <location>
        <begin position="46"/>
        <end position="699"/>
    </location>
</feature>
<feature type="modified residue" description="N-acetylmethionine" evidence="5">
    <location>
        <position position="1"/>
    </location>
</feature>
<feature type="modified residue" description="3'-nitrotyrosine" evidence="2">
    <location>
        <position position="9"/>
    </location>
</feature>
<feature type="modified residue" description="Phosphotyrosine" evidence="2">
    <location>
        <position position="85"/>
    </location>
</feature>
<feature type="modified residue" description="3'-nitrotyrosine" evidence="2">
    <location>
        <position position="86"/>
    </location>
</feature>
<feature type="modified residue" description="N6-acetyllysine" evidence="10">
    <location>
        <position position="208"/>
    </location>
</feature>
<feature type="modified residue" description="N6-acetyllysine" evidence="10">
    <location>
        <position position="357"/>
    </location>
</feature>
<feature type="modified residue" description="N6-acetyllysine" evidence="10">
    <location>
        <position position="387"/>
    </location>
</feature>
<feature type="modified residue" description="Phosphoserine" evidence="8 9">
    <location>
        <position position="621"/>
    </location>
</feature>
<feature type="modified residue" description="N6-acetyllysine" evidence="2">
    <location>
        <position position="633"/>
    </location>
</feature>
<feature type="glycosylation site" description="O-linked (GlcNAc) serine" evidence="1">
    <location>
        <position position="136"/>
    </location>
</feature>
<feature type="sequence conflict" description="In Ref. 1; AAA52193." evidence="6" ref="1">
    <original>EL</original>
    <variation>DV</variation>
    <location>
        <begin position="401"/>
        <end position="402"/>
    </location>
</feature>
<organism>
    <name type="scientific">Mus musculus</name>
    <name type="common">Mouse</name>
    <dbReference type="NCBI Taxonomy" id="10090"/>
    <lineage>
        <taxon>Eukaryota</taxon>
        <taxon>Metazoa</taxon>
        <taxon>Chordata</taxon>
        <taxon>Craniata</taxon>
        <taxon>Vertebrata</taxon>
        <taxon>Euteleostomi</taxon>
        <taxon>Mammalia</taxon>
        <taxon>Eutheria</taxon>
        <taxon>Euarchontoglires</taxon>
        <taxon>Glires</taxon>
        <taxon>Rodentia</taxon>
        <taxon>Myomorpha</taxon>
        <taxon>Muroidea</taxon>
        <taxon>Muridae</taxon>
        <taxon>Murinae</taxon>
        <taxon>Mus</taxon>
        <taxon>Mus</taxon>
    </lineage>
</organism>
<sequence length="699" mass="77951">MEVHELFRYFRMPELIDIRQYVRTLPTNTLMGFGAFAALTTFWYATRPKALKPPCDLSMQSVEIAGTTDGIRRSAVLEDDKLLVYYYDDVRTMYDGFQRGIQVSNNGPCLGSRKPNQPYEWISYKEVAELAECIGSGLIQKGFKPCSEQFIGLFSQNRPEWVIVEQGCFSYSMVVVPLYDTLGADAITYIVNKAELSVIFADKPEKAKLLLEGVENKLTPCLKIIVIMDSYGSDLVERGKKCGVEIISLKALEDLGRVNRVKPKPPEPEDLAIICFTSGTTGNPKGAMITHQNIINDCSGFIKATESAFIASTDDVLISFLPLAHMFETVVECVMLCHGAKIGFFQGDIRLLMDDLKVLQPTIFPVVPRLLNRMFDRIFGQANTSLKRWLLDFASKRKEAELRSGIVRNNSLWDKLIFHKIQSSLGGKVRLMITGAAPVSATVLTFLRTALGCQFYEGYGQTECTAGCCLSLPGDWTAGHVGAPMPCNYVKLVDVEEMNYLASKGEGEVCVKGANVFKGYLKDPARTAEALDKDGWLHTGDIGKWLPNGTLKIIDRKKHIFKLAQGEYIAPEKIENIYLRSEAVAQVFVHGESLQAFLIAVVVPDVESLPSWAQKRGLQGSFEELCRNKDINKAILDDLLKLGKEAGLKPFEQVKGIAVHPELFSIDNGLLTPTLKAKRPELRNYFRSQIDELYATIKI</sequence>
<keyword id="KW-0007">Acetylation</keyword>
<keyword id="KW-0067">ATP-binding</keyword>
<keyword id="KW-0903">Direct protein sequencing</keyword>
<keyword id="KW-0256">Endoplasmic reticulum</keyword>
<keyword id="KW-0276">Fatty acid metabolism</keyword>
<keyword id="KW-0325">Glycoprotein</keyword>
<keyword id="KW-0436">Ligase</keyword>
<keyword id="KW-0443">Lipid metabolism</keyword>
<keyword id="KW-0460">Magnesium</keyword>
<keyword id="KW-0472">Membrane</keyword>
<keyword id="KW-0492">Microsome</keyword>
<keyword id="KW-0496">Mitochondrion</keyword>
<keyword id="KW-1000">Mitochondrion outer membrane</keyword>
<keyword id="KW-0944">Nitration</keyword>
<keyword id="KW-0547">Nucleotide-binding</keyword>
<keyword id="KW-0576">Peroxisome</keyword>
<keyword id="KW-0597">Phosphoprotein</keyword>
<keyword id="KW-1185">Reference proteome</keyword>
<keyword id="KW-0735">Signal-anchor</keyword>
<keyword id="KW-0812">Transmembrane</keyword>
<keyword id="KW-1133">Transmembrane helix</keyword>
<name>ACSL1_MOUSE</name>
<protein>
    <recommendedName>
        <fullName evidence="6">Long-chain-fatty-acid--CoA ligase 1</fullName>
        <ecNumber evidence="3">6.2.1.3</ecNumber>
    </recommendedName>
    <alternativeName>
        <fullName>Arachidonate--CoA ligase</fullName>
        <ecNumber evidence="2">6.2.1.15</ecNumber>
    </alternativeName>
    <alternativeName>
        <fullName>Long-chain acyl-CoA synthetase 1</fullName>
        <shortName>LACS 1</shortName>
    </alternativeName>
    <alternativeName>
        <fullName>Phytanate--CoA ligase</fullName>
        <ecNumber evidence="2">6.2.1.24</ecNumber>
    </alternativeName>
</protein>
<dbReference type="EC" id="6.2.1.3" evidence="3"/>
<dbReference type="EC" id="6.2.1.15" evidence="2"/>
<dbReference type="EC" id="6.2.1.24" evidence="2"/>
<dbReference type="EMBL" id="U15977">
    <property type="protein sequence ID" value="AAA52193.1"/>
    <property type="molecule type" value="mRNA"/>
</dbReference>
<dbReference type="EMBL" id="AK004897">
    <property type="protein sequence ID" value="BAB23652.1"/>
    <property type="molecule type" value="mRNA"/>
</dbReference>
<dbReference type="EMBL" id="AK145900">
    <property type="protein sequence ID" value="BAE26736.1"/>
    <property type="molecule type" value="mRNA"/>
</dbReference>
<dbReference type="EMBL" id="AK149406">
    <property type="protein sequence ID" value="BAE28854.1"/>
    <property type="molecule type" value="mRNA"/>
</dbReference>
<dbReference type="EMBL" id="AK152772">
    <property type="protein sequence ID" value="BAE31484.1"/>
    <property type="molecule type" value="mRNA"/>
</dbReference>
<dbReference type="EMBL" id="AK153050">
    <property type="protein sequence ID" value="BAE31678.1"/>
    <property type="molecule type" value="mRNA"/>
</dbReference>
<dbReference type="EMBL" id="AK161189">
    <property type="protein sequence ID" value="BAE36230.1"/>
    <property type="molecule type" value="mRNA"/>
</dbReference>
<dbReference type="EMBL" id="AK168078">
    <property type="protein sequence ID" value="BAE40051.1"/>
    <property type="molecule type" value="mRNA"/>
</dbReference>
<dbReference type="EMBL" id="BC056644">
    <property type="protein sequence ID" value="AAH56644.1"/>
    <property type="molecule type" value="mRNA"/>
</dbReference>
<dbReference type="CCDS" id="CCDS22291.1"/>
<dbReference type="RefSeq" id="NP_001289092.1">
    <property type="nucleotide sequence ID" value="NM_001302163.2"/>
</dbReference>
<dbReference type="RefSeq" id="NP_001411721.1">
    <property type="nucleotide sequence ID" value="NM_001424792.1"/>
</dbReference>
<dbReference type="RefSeq" id="NP_032007.2">
    <property type="nucleotide sequence ID" value="NM_007981.4"/>
</dbReference>
<dbReference type="RefSeq" id="XP_006509325.2">
    <property type="nucleotide sequence ID" value="XM_006509262.4"/>
</dbReference>
<dbReference type="RefSeq" id="XP_006509327.1">
    <property type="nucleotide sequence ID" value="XM_006509264.3"/>
</dbReference>
<dbReference type="RefSeq" id="XP_006509328.1">
    <property type="nucleotide sequence ID" value="XM_006509265.4"/>
</dbReference>
<dbReference type="RefSeq" id="XP_006509329.1">
    <property type="nucleotide sequence ID" value="XM_006509266.4"/>
</dbReference>
<dbReference type="RefSeq" id="XP_017168052.1">
    <property type="nucleotide sequence ID" value="XM_017312563.3"/>
</dbReference>
<dbReference type="SMR" id="P41216"/>
<dbReference type="BioGRID" id="199585">
    <property type="interactions" value="14"/>
</dbReference>
<dbReference type="FunCoup" id="P41216">
    <property type="interactions" value="2000"/>
</dbReference>
<dbReference type="IntAct" id="P41216">
    <property type="interactions" value="10"/>
</dbReference>
<dbReference type="STRING" id="10090.ENSMUSP00000034046"/>
<dbReference type="BindingDB" id="P41216"/>
<dbReference type="ChEMBL" id="CHEMBL4680026"/>
<dbReference type="CarbonylDB" id="P41216"/>
<dbReference type="GlyCosmos" id="P41216">
    <property type="glycosylation" value="1 site, No reported glycans"/>
</dbReference>
<dbReference type="GlyGen" id="P41216">
    <property type="glycosylation" value="3 sites, 1 N-linked glycan (1 site), 1 O-linked glycan (1 site)"/>
</dbReference>
<dbReference type="iPTMnet" id="P41216"/>
<dbReference type="PhosphoSitePlus" id="P41216"/>
<dbReference type="SwissPalm" id="P41216"/>
<dbReference type="jPOST" id="P41216"/>
<dbReference type="PaxDb" id="10090-ENSMUSP00000034046"/>
<dbReference type="ProteomicsDB" id="285656"/>
<dbReference type="Pumba" id="P41216"/>
<dbReference type="Antibodypedia" id="1946">
    <property type="antibodies" value="306 antibodies from 35 providers"/>
</dbReference>
<dbReference type="DNASU" id="14081"/>
<dbReference type="Ensembl" id="ENSMUST00000034046.13">
    <property type="protein sequence ID" value="ENSMUSP00000034046.6"/>
    <property type="gene ID" value="ENSMUSG00000018796.14"/>
</dbReference>
<dbReference type="Ensembl" id="ENSMUST00000110372.9">
    <property type="protein sequence ID" value="ENSMUSP00000106001.2"/>
    <property type="gene ID" value="ENSMUSG00000018796.14"/>
</dbReference>
<dbReference type="GeneID" id="14081"/>
<dbReference type="KEGG" id="mmu:14081"/>
<dbReference type="UCSC" id="uc009lqe.2">
    <property type="organism name" value="mouse"/>
</dbReference>
<dbReference type="AGR" id="MGI:102797"/>
<dbReference type="CTD" id="2180"/>
<dbReference type="MGI" id="MGI:102797">
    <property type="gene designation" value="Acsl1"/>
</dbReference>
<dbReference type="VEuPathDB" id="HostDB:ENSMUSG00000018796"/>
<dbReference type="eggNOG" id="KOG1256">
    <property type="taxonomic scope" value="Eukaryota"/>
</dbReference>
<dbReference type="GeneTree" id="ENSGT00940000154508"/>
<dbReference type="HOGENOM" id="CLU_000022_45_4_1"/>
<dbReference type="InParanoid" id="P41216"/>
<dbReference type="OMA" id="WYHSIGL"/>
<dbReference type="OrthoDB" id="1700726at2759"/>
<dbReference type="PhylomeDB" id="P41216"/>
<dbReference type="TreeFam" id="TF313877"/>
<dbReference type="BRENDA" id="6.2.1.3">
    <property type="organism ID" value="3474"/>
</dbReference>
<dbReference type="Reactome" id="R-MMU-2046105">
    <property type="pathway name" value="Linoleic acid (LA) metabolism"/>
</dbReference>
<dbReference type="Reactome" id="R-MMU-2046106">
    <property type="pathway name" value="alpha-linolenic acid (ALA) metabolism"/>
</dbReference>
<dbReference type="Reactome" id="R-MMU-75876">
    <property type="pathway name" value="Synthesis of very long-chain fatty acyl-CoAs"/>
</dbReference>
<dbReference type="BioGRID-ORCS" id="14081">
    <property type="hits" value="8 hits in 78 CRISPR screens"/>
</dbReference>
<dbReference type="CD-CODE" id="CE726F99">
    <property type="entry name" value="Postsynaptic density"/>
</dbReference>
<dbReference type="ChiTaRS" id="Acsl1">
    <property type="organism name" value="mouse"/>
</dbReference>
<dbReference type="PRO" id="PR:P41216"/>
<dbReference type="Proteomes" id="UP000000589">
    <property type="component" value="Chromosome 8"/>
</dbReference>
<dbReference type="RNAct" id="P41216">
    <property type="molecule type" value="protein"/>
</dbReference>
<dbReference type="Bgee" id="ENSMUSG00000018796">
    <property type="expression patterns" value="Expressed in brown adipose tissue and 288 other cell types or tissues"/>
</dbReference>
<dbReference type="ExpressionAtlas" id="P41216">
    <property type="expression patterns" value="baseline and differential"/>
</dbReference>
<dbReference type="GO" id="GO:0005783">
    <property type="term" value="C:endoplasmic reticulum"/>
    <property type="evidence" value="ECO:0000250"/>
    <property type="project" value="UniProtKB"/>
</dbReference>
<dbReference type="GO" id="GO:0005789">
    <property type="term" value="C:endoplasmic reticulum membrane"/>
    <property type="evidence" value="ECO:0000314"/>
    <property type="project" value="MGI"/>
</dbReference>
<dbReference type="GO" id="GO:0005741">
    <property type="term" value="C:mitochondrial outer membrane"/>
    <property type="evidence" value="ECO:0000314"/>
    <property type="project" value="MGI"/>
</dbReference>
<dbReference type="GO" id="GO:0005739">
    <property type="term" value="C:mitochondrion"/>
    <property type="evidence" value="ECO:0007005"/>
    <property type="project" value="MGI"/>
</dbReference>
<dbReference type="GO" id="GO:0005778">
    <property type="term" value="C:peroxisomal membrane"/>
    <property type="evidence" value="ECO:0007669"/>
    <property type="project" value="UniProtKB-SubCell"/>
</dbReference>
<dbReference type="GO" id="GO:0047676">
    <property type="term" value="F:arachidonate-CoA ligase activity"/>
    <property type="evidence" value="ECO:0000250"/>
    <property type="project" value="UniProtKB"/>
</dbReference>
<dbReference type="GO" id="GO:0005524">
    <property type="term" value="F:ATP binding"/>
    <property type="evidence" value="ECO:0007669"/>
    <property type="project" value="UniProtKB-KW"/>
</dbReference>
<dbReference type="GO" id="GO:0004467">
    <property type="term" value="F:long-chain fatty acid-CoA ligase activity"/>
    <property type="evidence" value="ECO:0000315"/>
    <property type="project" value="MGI"/>
</dbReference>
<dbReference type="GO" id="GO:0090434">
    <property type="term" value="F:oleoyl-CoA ligase activity"/>
    <property type="evidence" value="ECO:0007669"/>
    <property type="project" value="Ensembl"/>
</dbReference>
<dbReference type="GO" id="GO:0090433">
    <property type="term" value="F:palmitoyl-CoA ligase activity"/>
    <property type="evidence" value="ECO:0000315"/>
    <property type="project" value="MGI"/>
</dbReference>
<dbReference type="GO" id="GO:0050197">
    <property type="term" value="F:phytanate-CoA ligase activity"/>
    <property type="evidence" value="ECO:0000250"/>
    <property type="project" value="UniProtKB"/>
</dbReference>
<dbReference type="GO" id="GO:0070251">
    <property type="term" value="F:pristanate-CoA ligase activity"/>
    <property type="evidence" value="ECO:0007669"/>
    <property type="project" value="RHEA"/>
</dbReference>
<dbReference type="GO" id="GO:0043539">
    <property type="term" value="F:protein serine/threonine kinase activator activity"/>
    <property type="evidence" value="ECO:0000315"/>
    <property type="project" value="MGI"/>
</dbReference>
<dbReference type="GO" id="GO:0033211">
    <property type="term" value="P:adiponectin-activated signaling pathway"/>
    <property type="evidence" value="ECO:0000315"/>
    <property type="project" value="MGI"/>
</dbReference>
<dbReference type="GO" id="GO:0006633">
    <property type="term" value="P:fatty acid biosynthetic process"/>
    <property type="evidence" value="ECO:0000315"/>
    <property type="project" value="MGI"/>
</dbReference>
<dbReference type="GO" id="GO:0043651">
    <property type="term" value="P:linoleic acid metabolic process"/>
    <property type="evidence" value="ECO:0000315"/>
    <property type="project" value="MGI"/>
</dbReference>
<dbReference type="GO" id="GO:0044539">
    <property type="term" value="P:long-chain fatty acid import into cell"/>
    <property type="evidence" value="ECO:0007669"/>
    <property type="project" value="Ensembl"/>
</dbReference>
<dbReference type="GO" id="GO:0001676">
    <property type="term" value="P:long-chain fatty acid metabolic process"/>
    <property type="evidence" value="ECO:0000250"/>
    <property type="project" value="UniProtKB"/>
</dbReference>
<dbReference type="GO" id="GO:0035338">
    <property type="term" value="P:long-chain fatty-acyl-CoA biosynthetic process"/>
    <property type="evidence" value="ECO:0007669"/>
    <property type="project" value="Ensembl"/>
</dbReference>
<dbReference type="GO" id="GO:0120162">
    <property type="term" value="P:positive regulation of cold-induced thermogenesis"/>
    <property type="evidence" value="ECO:0000315"/>
    <property type="project" value="YuBioLab"/>
</dbReference>
<dbReference type="GO" id="GO:0010747">
    <property type="term" value="P:positive regulation of long-chain fatty acid import across plasma membrane"/>
    <property type="evidence" value="ECO:0007669"/>
    <property type="project" value="Ensembl"/>
</dbReference>
<dbReference type="GO" id="GO:0007584">
    <property type="term" value="P:response to nutrient"/>
    <property type="evidence" value="ECO:0007669"/>
    <property type="project" value="Ensembl"/>
</dbReference>
<dbReference type="GO" id="GO:0034201">
    <property type="term" value="P:response to oleic acid"/>
    <property type="evidence" value="ECO:0007669"/>
    <property type="project" value="Ensembl"/>
</dbReference>
<dbReference type="GO" id="GO:0019432">
    <property type="term" value="P:triglyceride biosynthetic process"/>
    <property type="evidence" value="ECO:0007669"/>
    <property type="project" value="Ensembl"/>
</dbReference>
<dbReference type="GO" id="GO:0000038">
    <property type="term" value="P:very long-chain fatty acid metabolic process"/>
    <property type="evidence" value="ECO:0000250"/>
    <property type="project" value="UniProtKB"/>
</dbReference>
<dbReference type="GO" id="GO:0042178">
    <property type="term" value="P:xenobiotic catabolic process"/>
    <property type="evidence" value="ECO:0007669"/>
    <property type="project" value="Ensembl"/>
</dbReference>
<dbReference type="CDD" id="cd05927">
    <property type="entry name" value="LC-FACS_euk"/>
    <property type="match status" value="1"/>
</dbReference>
<dbReference type="FunFam" id="3.40.50.12780:FF:000006">
    <property type="entry name" value="long-chain-fatty-acid--CoA ligase 6 isoform X2"/>
    <property type="match status" value="1"/>
</dbReference>
<dbReference type="Gene3D" id="3.40.50.12780">
    <property type="entry name" value="N-terminal domain of ligase-like"/>
    <property type="match status" value="1"/>
</dbReference>
<dbReference type="InterPro" id="IPR020845">
    <property type="entry name" value="AMP-binding_CS"/>
</dbReference>
<dbReference type="InterPro" id="IPR000873">
    <property type="entry name" value="AMP-dep_synth/lig_dom"/>
</dbReference>
<dbReference type="InterPro" id="IPR042099">
    <property type="entry name" value="ANL_N_sf"/>
</dbReference>
<dbReference type="InterPro" id="IPR045311">
    <property type="entry name" value="LC-FACS_euk"/>
</dbReference>
<dbReference type="PANTHER" id="PTHR43272">
    <property type="entry name" value="LONG-CHAIN-FATTY-ACID--COA LIGASE"/>
    <property type="match status" value="1"/>
</dbReference>
<dbReference type="PANTHER" id="PTHR43272:SF28">
    <property type="entry name" value="LONG-CHAIN-FATTY-ACID--COA LIGASE 1"/>
    <property type="match status" value="1"/>
</dbReference>
<dbReference type="Pfam" id="PF00501">
    <property type="entry name" value="AMP-binding"/>
    <property type="match status" value="1"/>
</dbReference>
<dbReference type="SUPFAM" id="SSF56801">
    <property type="entry name" value="Acetyl-CoA synthetase-like"/>
    <property type="match status" value="1"/>
</dbReference>
<dbReference type="PROSITE" id="PS00455">
    <property type="entry name" value="AMP_BINDING"/>
    <property type="match status" value="1"/>
</dbReference>